<evidence type="ECO:0000255" key="1">
    <source>
        <dbReference type="HAMAP-Rule" id="MF_01216"/>
    </source>
</evidence>
<protein>
    <recommendedName>
        <fullName evidence="1">FMN-dependent NADH:quinone oxidoreductase 1</fullName>
        <ecNumber evidence="1">1.6.5.-</ecNumber>
    </recommendedName>
    <alternativeName>
        <fullName evidence="1">Azo-dye reductase 1</fullName>
    </alternativeName>
    <alternativeName>
        <fullName evidence="1">FMN-dependent NADH-azo compound oxidoreductase 1</fullName>
    </alternativeName>
    <alternativeName>
        <fullName evidence="1">FMN-dependent NADH-azoreductase 1</fullName>
        <ecNumber evidence="1">1.7.1.17</ecNumber>
    </alternativeName>
</protein>
<accession>Q3BUY7</accession>
<organism>
    <name type="scientific">Xanthomonas euvesicatoria pv. vesicatoria (strain 85-10)</name>
    <name type="common">Xanthomonas campestris pv. vesicatoria</name>
    <dbReference type="NCBI Taxonomy" id="316273"/>
    <lineage>
        <taxon>Bacteria</taxon>
        <taxon>Pseudomonadati</taxon>
        <taxon>Pseudomonadota</taxon>
        <taxon>Gammaproteobacteria</taxon>
        <taxon>Lysobacterales</taxon>
        <taxon>Lysobacteraceae</taxon>
        <taxon>Xanthomonas</taxon>
    </lineage>
</organism>
<name>AZOR1_XANE5</name>
<sequence>MKLLHLDSSALGANSVTRVLSAAVVEQQRRRHPEVDVSYRDLDRDPIPHLTAQTLAQTDPAEAAAAEAVMQQFLQADVIVIGAPMYNFAIPSTLKAWIDRIAVAGRTFQYTANGPEGLAGGKRVIIASARGGLYADPTNDFQEPYLRQVLGFLGIDDISFVRAEGVAYSPQHRADALASALAGLGEEEEAAVSA</sequence>
<proteinExistence type="inferred from homology"/>
<dbReference type="EC" id="1.6.5.-" evidence="1"/>
<dbReference type="EC" id="1.7.1.17" evidence="1"/>
<dbReference type="EMBL" id="AM039952">
    <property type="protein sequence ID" value="CAJ23372.1"/>
    <property type="molecule type" value="Genomic_DNA"/>
</dbReference>
<dbReference type="RefSeq" id="WP_011347050.1">
    <property type="nucleotide sequence ID" value="NZ_CP017190.1"/>
</dbReference>
<dbReference type="SMR" id="Q3BUY7"/>
<dbReference type="STRING" id="456327.BJD11_14105"/>
<dbReference type="KEGG" id="xcv:XCV1695"/>
<dbReference type="eggNOG" id="COG1182">
    <property type="taxonomic scope" value="Bacteria"/>
</dbReference>
<dbReference type="HOGENOM" id="CLU_088964_0_0_6"/>
<dbReference type="Proteomes" id="UP000007069">
    <property type="component" value="Chromosome"/>
</dbReference>
<dbReference type="GO" id="GO:0009055">
    <property type="term" value="F:electron transfer activity"/>
    <property type="evidence" value="ECO:0007669"/>
    <property type="project" value="UniProtKB-UniRule"/>
</dbReference>
<dbReference type="GO" id="GO:0010181">
    <property type="term" value="F:FMN binding"/>
    <property type="evidence" value="ECO:0007669"/>
    <property type="project" value="UniProtKB-UniRule"/>
</dbReference>
<dbReference type="GO" id="GO:0016652">
    <property type="term" value="F:oxidoreductase activity, acting on NAD(P)H as acceptor"/>
    <property type="evidence" value="ECO:0007669"/>
    <property type="project" value="UniProtKB-UniRule"/>
</dbReference>
<dbReference type="GO" id="GO:0016655">
    <property type="term" value="F:oxidoreductase activity, acting on NAD(P)H, quinone or similar compound as acceptor"/>
    <property type="evidence" value="ECO:0007669"/>
    <property type="project" value="InterPro"/>
</dbReference>
<dbReference type="Gene3D" id="3.40.50.360">
    <property type="match status" value="1"/>
</dbReference>
<dbReference type="HAMAP" id="MF_01216">
    <property type="entry name" value="Azoreductase_type1"/>
    <property type="match status" value="1"/>
</dbReference>
<dbReference type="InterPro" id="IPR003680">
    <property type="entry name" value="Flavodoxin_fold"/>
</dbReference>
<dbReference type="InterPro" id="IPR029039">
    <property type="entry name" value="Flavoprotein-like_sf"/>
</dbReference>
<dbReference type="InterPro" id="IPR050104">
    <property type="entry name" value="FMN-dep_NADH:Q_OxRdtase_AzoR1"/>
</dbReference>
<dbReference type="InterPro" id="IPR023048">
    <property type="entry name" value="NADH:quinone_OxRdtase_FMN_depd"/>
</dbReference>
<dbReference type="PANTHER" id="PTHR43741">
    <property type="entry name" value="FMN-DEPENDENT NADH-AZOREDUCTASE 1"/>
    <property type="match status" value="1"/>
</dbReference>
<dbReference type="PANTHER" id="PTHR43741:SF4">
    <property type="entry name" value="FMN-DEPENDENT NADH:QUINONE OXIDOREDUCTASE"/>
    <property type="match status" value="1"/>
</dbReference>
<dbReference type="Pfam" id="PF02525">
    <property type="entry name" value="Flavodoxin_2"/>
    <property type="match status" value="1"/>
</dbReference>
<dbReference type="SUPFAM" id="SSF52218">
    <property type="entry name" value="Flavoproteins"/>
    <property type="match status" value="1"/>
</dbReference>
<gene>
    <name evidence="1" type="primary">azoR1</name>
    <name type="ordered locus">XCV1695</name>
</gene>
<reference key="1">
    <citation type="journal article" date="2005" name="J. Bacteriol.">
        <title>Insights into genome plasticity and pathogenicity of the plant pathogenic Bacterium Xanthomonas campestris pv. vesicatoria revealed by the complete genome sequence.</title>
        <authorList>
            <person name="Thieme F."/>
            <person name="Koebnik R."/>
            <person name="Bekel T."/>
            <person name="Berger C."/>
            <person name="Boch J."/>
            <person name="Buettner D."/>
            <person name="Caldana C."/>
            <person name="Gaigalat L."/>
            <person name="Goesmann A."/>
            <person name="Kay S."/>
            <person name="Kirchner O."/>
            <person name="Lanz C."/>
            <person name="Linke B."/>
            <person name="McHardy A.C."/>
            <person name="Meyer F."/>
            <person name="Mittenhuber G."/>
            <person name="Nies D.H."/>
            <person name="Niesbach-Kloesgen U."/>
            <person name="Patschkowski T."/>
            <person name="Rueckert C."/>
            <person name="Rupp O."/>
            <person name="Schneiker S."/>
            <person name="Schuster S.C."/>
            <person name="Vorhoelter F.J."/>
            <person name="Weber E."/>
            <person name="Puehler A."/>
            <person name="Bonas U."/>
            <person name="Bartels D."/>
            <person name="Kaiser O."/>
        </authorList>
    </citation>
    <scope>NUCLEOTIDE SEQUENCE [LARGE SCALE GENOMIC DNA]</scope>
    <source>
        <strain>85-10</strain>
    </source>
</reference>
<comment type="function">
    <text evidence="1">Quinone reductase that provides resistance to thiol-specific stress caused by electrophilic quinones.</text>
</comment>
<comment type="function">
    <text evidence="1">Also exhibits azoreductase activity. Catalyzes the reductive cleavage of the azo bond in aromatic azo compounds to the corresponding amines.</text>
</comment>
<comment type="catalytic activity">
    <reaction evidence="1">
        <text>2 a quinone + NADH + H(+) = 2 a 1,4-benzosemiquinone + NAD(+)</text>
        <dbReference type="Rhea" id="RHEA:65952"/>
        <dbReference type="ChEBI" id="CHEBI:15378"/>
        <dbReference type="ChEBI" id="CHEBI:57540"/>
        <dbReference type="ChEBI" id="CHEBI:57945"/>
        <dbReference type="ChEBI" id="CHEBI:132124"/>
        <dbReference type="ChEBI" id="CHEBI:134225"/>
    </reaction>
</comment>
<comment type="catalytic activity">
    <reaction evidence="1">
        <text>N,N-dimethyl-1,4-phenylenediamine + anthranilate + 2 NAD(+) = 2-(4-dimethylaminophenyl)diazenylbenzoate + 2 NADH + 2 H(+)</text>
        <dbReference type="Rhea" id="RHEA:55872"/>
        <dbReference type="ChEBI" id="CHEBI:15378"/>
        <dbReference type="ChEBI" id="CHEBI:15783"/>
        <dbReference type="ChEBI" id="CHEBI:16567"/>
        <dbReference type="ChEBI" id="CHEBI:57540"/>
        <dbReference type="ChEBI" id="CHEBI:57945"/>
        <dbReference type="ChEBI" id="CHEBI:71579"/>
        <dbReference type="EC" id="1.7.1.17"/>
    </reaction>
</comment>
<comment type="cofactor">
    <cofactor evidence="1">
        <name>FMN</name>
        <dbReference type="ChEBI" id="CHEBI:58210"/>
    </cofactor>
    <text evidence="1">Binds 1 FMN per subunit.</text>
</comment>
<comment type="subunit">
    <text evidence="1">Homodimer.</text>
</comment>
<comment type="similarity">
    <text evidence="1">Belongs to the azoreductase type 1 family.</text>
</comment>
<feature type="chain" id="PRO_0000245984" description="FMN-dependent NADH:quinone oxidoreductase 1">
    <location>
        <begin position="1"/>
        <end position="194"/>
    </location>
</feature>
<feature type="binding site" evidence="1">
    <location>
        <position position="9"/>
    </location>
    <ligand>
        <name>FMN</name>
        <dbReference type="ChEBI" id="CHEBI:58210"/>
    </ligand>
</feature>
<feature type="binding site" evidence="1">
    <location>
        <begin position="85"/>
        <end position="88"/>
    </location>
    <ligand>
        <name>FMN</name>
        <dbReference type="ChEBI" id="CHEBI:58210"/>
    </ligand>
</feature>
<keyword id="KW-0285">Flavoprotein</keyword>
<keyword id="KW-0288">FMN</keyword>
<keyword id="KW-0520">NAD</keyword>
<keyword id="KW-0560">Oxidoreductase</keyword>